<dbReference type="EMBL" id="CP000606">
    <property type="protein sequence ID" value="ABO23221.1"/>
    <property type="molecule type" value="Genomic_DNA"/>
</dbReference>
<dbReference type="RefSeq" id="WP_011865153.1">
    <property type="nucleotide sequence ID" value="NC_009092.1"/>
</dbReference>
<dbReference type="SMR" id="A3QCM3"/>
<dbReference type="STRING" id="323850.Shew_1352"/>
<dbReference type="KEGG" id="slo:Shew_1352"/>
<dbReference type="eggNOG" id="COG1706">
    <property type="taxonomic scope" value="Bacteria"/>
</dbReference>
<dbReference type="HOGENOM" id="CLU_045235_1_0_6"/>
<dbReference type="OrthoDB" id="9786431at2"/>
<dbReference type="Proteomes" id="UP000001558">
    <property type="component" value="Chromosome"/>
</dbReference>
<dbReference type="GO" id="GO:0009428">
    <property type="term" value="C:bacterial-type flagellum basal body, distal rod, P ring"/>
    <property type="evidence" value="ECO:0007669"/>
    <property type="project" value="InterPro"/>
</dbReference>
<dbReference type="GO" id="GO:0030288">
    <property type="term" value="C:outer membrane-bounded periplasmic space"/>
    <property type="evidence" value="ECO:0007669"/>
    <property type="project" value="InterPro"/>
</dbReference>
<dbReference type="GO" id="GO:0005198">
    <property type="term" value="F:structural molecule activity"/>
    <property type="evidence" value="ECO:0007669"/>
    <property type="project" value="InterPro"/>
</dbReference>
<dbReference type="GO" id="GO:0071973">
    <property type="term" value="P:bacterial-type flagellum-dependent cell motility"/>
    <property type="evidence" value="ECO:0007669"/>
    <property type="project" value="InterPro"/>
</dbReference>
<dbReference type="HAMAP" id="MF_00416">
    <property type="entry name" value="FlgI"/>
    <property type="match status" value="1"/>
</dbReference>
<dbReference type="InterPro" id="IPR001782">
    <property type="entry name" value="Flag_FlgI"/>
</dbReference>
<dbReference type="NCBIfam" id="NF003676">
    <property type="entry name" value="PRK05303.1"/>
    <property type="match status" value="1"/>
</dbReference>
<dbReference type="PANTHER" id="PTHR30381">
    <property type="entry name" value="FLAGELLAR P-RING PERIPLASMIC PROTEIN FLGI"/>
    <property type="match status" value="1"/>
</dbReference>
<dbReference type="PANTHER" id="PTHR30381:SF0">
    <property type="entry name" value="FLAGELLAR P-RING PROTEIN"/>
    <property type="match status" value="1"/>
</dbReference>
<dbReference type="Pfam" id="PF02119">
    <property type="entry name" value="FlgI"/>
    <property type="match status" value="1"/>
</dbReference>
<dbReference type="PRINTS" id="PR01010">
    <property type="entry name" value="FLGPRINGFLGI"/>
</dbReference>
<proteinExistence type="inferred from homology"/>
<accession>A3QCM3</accession>
<protein>
    <recommendedName>
        <fullName evidence="1">Flagellar P-ring protein</fullName>
    </recommendedName>
    <alternativeName>
        <fullName evidence="1">Basal body P-ring protein</fullName>
    </alternativeName>
</protein>
<feature type="signal peptide" evidence="1">
    <location>
        <begin position="1"/>
        <end position="20"/>
    </location>
</feature>
<feature type="chain" id="PRO_5000229084" description="Flagellar P-ring protein">
    <location>
        <begin position="21"/>
        <end position="363"/>
    </location>
</feature>
<organism>
    <name type="scientific">Shewanella loihica (strain ATCC BAA-1088 / PV-4)</name>
    <dbReference type="NCBI Taxonomy" id="323850"/>
    <lineage>
        <taxon>Bacteria</taxon>
        <taxon>Pseudomonadati</taxon>
        <taxon>Pseudomonadota</taxon>
        <taxon>Gammaproteobacteria</taxon>
        <taxon>Alteromonadales</taxon>
        <taxon>Shewanellaceae</taxon>
        <taxon>Shewanella</taxon>
    </lineage>
</organism>
<keyword id="KW-0975">Bacterial flagellum</keyword>
<keyword id="KW-0574">Periplasm</keyword>
<keyword id="KW-1185">Reference proteome</keyword>
<keyword id="KW-0732">Signal</keyword>
<sequence length="363" mass="37975">MKIKLILACALMVFSAASSAQRIKDIANVQGVRSNQLIGYGLVVGLPGTGEKTRYTEQTFKTMLKNFGINLPDNFRPKIKNVAVVAVSADMPAFIKPGQTLDVTVSSLGEAKSLRGGTLLQTFLKGVDGNVYAIAQGSMVVSGFSAEGLDGSKVIQNTPTVGRIPNGAIVERTVATPFSTGDHLTFNLRRADFSTAKRLADAINDLLGPGMARPLDAASVQVSAPRDVSQRVSFLATLENIEVEPASESAKVIVNSRTGTIVVGKDVRLLPAAVTHGGLTVTIAEATQVSQPNPLAGGDTVVTSDSTIDVSEADNRMFLFNPGTTLDELVRAVNLVGAAPSDVLAILEALKVAGALHGELIII</sequence>
<evidence type="ECO:0000255" key="1">
    <source>
        <dbReference type="HAMAP-Rule" id="MF_00416"/>
    </source>
</evidence>
<gene>
    <name evidence="1" type="primary">flgI</name>
    <name type="ordered locus">Shew_1352</name>
</gene>
<comment type="function">
    <text evidence="1">Assembles around the rod to form the L-ring and probably protects the motor/basal body from shearing forces during rotation.</text>
</comment>
<comment type="subunit">
    <text evidence="1">The basal body constitutes a major portion of the flagellar organelle and consists of four rings (L,P,S, and M) mounted on a central rod.</text>
</comment>
<comment type="subcellular location">
    <subcellularLocation>
        <location evidence="1">Periplasm</location>
    </subcellularLocation>
    <subcellularLocation>
        <location evidence="1">Bacterial flagellum basal body</location>
    </subcellularLocation>
</comment>
<comment type="similarity">
    <text evidence="1">Belongs to the FlgI family.</text>
</comment>
<reference key="1">
    <citation type="submission" date="2007-03" db="EMBL/GenBank/DDBJ databases">
        <title>Complete sequence of Shewanella loihica PV-4.</title>
        <authorList>
            <consortium name="US DOE Joint Genome Institute"/>
            <person name="Copeland A."/>
            <person name="Lucas S."/>
            <person name="Lapidus A."/>
            <person name="Barry K."/>
            <person name="Detter J.C."/>
            <person name="Glavina del Rio T."/>
            <person name="Hammon N."/>
            <person name="Israni S."/>
            <person name="Dalin E."/>
            <person name="Tice H."/>
            <person name="Pitluck S."/>
            <person name="Chain P."/>
            <person name="Malfatti S."/>
            <person name="Shin M."/>
            <person name="Vergez L."/>
            <person name="Schmutz J."/>
            <person name="Larimer F."/>
            <person name="Land M."/>
            <person name="Hauser L."/>
            <person name="Kyrpides N."/>
            <person name="Mikhailova N."/>
            <person name="Romine M.F."/>
            <person name="Serres G."/>
            <person name="Fredrickson J."/>
            <person name="Tiedje J."/>
            <person name="Richardson P."/>
        </authorList>
    </citation>
    <scope>NUCLEOTIDE SEQUENCE [LARGE SCALE GENOMIC DNA]</scope>
    <source>
        <strain>ATCC BAA-1088 / PV-4</strain>
    </source>
</reference>
<name>FLGI_SHELP</name>